<keyword id="KW-0020">Allergen</keyword>
<keyword id="KW-1015">Disulfide bond</keyword>
<keyword id="KW-0964">Secreted</keyword>
<keyword id="KW-0732">Signal</keyword>
<accession>B2MVK7</accession>
<sequence>MTKIDLLARVFVIATIIALATAVDYYKLKCPPKTKHTMCIYGTNSHPSRNCGVVKGSGPTDQEKREILKEHNDYGHKVASGEEKRGVNGGQPAAKNMEDMTWDDELAKVAQTWANQCTINHDKCRSVSRFSVGQNLASKSTTGNDFPPVVELIQLWENEVSDFDKNNIKSLPASGISKTGHYTQMVWAKSNKLGCGSIKHHKDGWNKHFLVCNYGPSGNYLGQSVYEV</sequence>
<proteinExistence type="evidence at transcript level"/>
<feature type="signal peptide" evidence="2">
    <location>
        <begin position="1"/>
        <end position="22"/>
    </location>
</feature>
<feature type="chain" id="PRO_0000401931" description="Venom allergen 5">
    <location>
        <begin position="23"/>
        <end position="228"/>
    </location>
</feature>
<feature type="domain" description="SCP">
    <location>
        <begin position="69"/>
        <end position="214"/>
    </location>
</feature>
<feature type="disulfide bond" evidence="1">
    <location>
        <begin position="30"/>
        <end position="124"/>
    </location>
</feature>
<feature type="disulfide bond" evidence="1">
    <location>
        <begin position="51"/>
        <end position="117"/>
    </location>
</feature>
<feature type="disulfide bond" evidence="1">
    <location>
        <begin position="195"/>
        <end position="212"/>
    </location>
</feature>
<reference key="1">
    <citation type="submission" date="2008-04" db="EMBL/GenBank/DDBJ databases">
        <title>Cloning and sequence analysis of two genes for venom allergens from Rhynchium brunneum Fabricius.</title>
        <authorList>
            <person name="Xu J."/>
            <person name="Han Z."/>
        </authorList>
    </citation>
    <scope>NUCLEOTIDE SEQUENCE [MRNA]</scope>
    <source>
        <tissue>Venom gland</tissue>
    </source>
</reference>
<name>VA5_RHYBR</name>
<evidence type="ECO:0000250" key="1"/>
<evidence type="ECO:0000255" key="2"/>
<evidence type="ECO:0000305" key="3"/>
<comment type="subcellular location">
    <subcellularLocation>
        <location evidence="1">Secreted</location>
    </subcellularLocation>
</comment>
<comment type="tissue specificity">
    <text>Expressed by the venom gland.</text>
</comment>
<comment type="allergen">
    <text evidence="1">Causes an allergic reaction in human.</text>
</comment>
<comment type="similarity">
    <text evidence="3">Belongs to the CRISP family. Venom allergen 5-like subfamily.</text>
</comment>
<dbReference type="EMBL" id="EU624136">
    <property type="protein sequence ID" value="ACC93935.1"/>
    <property type="molecule type" value="mRNA"/>
</dbReference>
<dbReference type="SMR" id="B2MVK7"/>
<dbReference type="GO" id="GO:0005576">
    <property type="term" value="C:extracellular region"/>
    <property type="evidence" value="ECO:0007669"/>
    <property type="project" value="UniProtKB-SubCell"/>
</dbReference>
<dbReference type="CDD" id="cd05380">
    <property type="entry name" value="CAP_euk"/>
    <property type="match status" value="1"/>
</dbReference>
<dbReference type="Gene3D" id="3.40.33.10">
    <property type="entry name" value="CAP"/>
    <property type="match status" value="1"/>
</dbReference>
<dbReference type="InterPro" id="IPR018244">
    <property type="entry name" value="Allrgn_V5/Tpx1_CS"/>
</dbReference>
<dbReference type="InterPro" id="IPR014044">
    <property type="entry name" value="CAP_dom"/>
</dbReference>
<dbReference type="InterPro" id="IPR035940">
    <property type="entry name" value="CAP_sf"/>
</dbReference>
<dbReference type="InterPro" id="IPR001283">
    <property type="entry name" value="CRISP-related"/>
</dbReference>
<dbReference type="InterPro" id="IPR002413">
    <property type="entry name" value="V5_allergen-like"/>
</dbReference>
<dbReference type="PANTHER" id="PTHR10334">
    <property type="entry name" value="CYSTEINE-RICH SECRETORY PROTEIN-RELATED"/>
    <property type="match status" value="1"/>
</dbReference>
<dbReference type="Pfam" id="PF00188">
    <property type="entry name" value="CAP"/>
    <property type="match status" value="1"/>
</dbReference>
<dbReference type="PRINTS" id="PR00838">
    <property type="entry name" value="V5ALLERGEN"/>
</dbReference>
<dbReference type="PRINTS" id="PR00837">
    <property type="entry name" value="V5TPXLIKE"/>
</dbReference>
<dbReference type="SMART" id="SM00198">
    <property type="entry name" value="SCP"/>
    <property type="match status" value="1"/>
</dbReference>
<dbReference type="SUPFAM" id="SSF55797">
    <property type="entry name" value="PR-1-like"/>
    <property type="match status" value="1"/>
</dbReference>
<dbReference type="PROSITE" id="PS01009">
    <property type="entry name" value="CRISP_1"/>
    <property type="match status" value="1"/>
</dbReference>
<dbReference type="PROSITE" id="PS01010">
    <property type="entry name" value="CRISP_2"/>
    <property type="match status" value="1"/>
</dbReference>
<organism>
    <name type="scientific">Rhynchium brunneum</name>
    <name type="common">Potter wasp</name>
    <dbReference type="NCBI Taxonomy" id="522437"/>
    <lineage>
        <taxon>Eukaryota</taxon>
        <taxon>Metazoa</taxon>
        <taxon>Ecdysozoa</taxon>
        <taxon>Arthropoda</taxon>
        <taxon>Hexapoda</taxon>
        <taxon>Insecta</taxon>
        <taxon>Pterygota</taxon>
        <taxon>Neoptera</taxon>
        <taxon>Endopterygota</taxon>
        <taxon>Hymenoptera</taxon>
        <taxon>Apocrita</taxon>
        <taxon>Aculeata</taxon>
        <taxon>Vespoidea</taxon>
        <taxon>Vespidae</taxon>
        <taxon>Eumeninae</taxon>
        <taxon>Rhynchium</taxon>
    </lineage>
</organism>
<protein>
    <recommendedName>
        <fullName>Venom allergen 5</fullName>
    </recommendedName>
    <alternativeName>
        <fullName>Antigen 5</fullName>
    </alternativeName>
    <alternativeName>
        <fullName>Cysteine-rich venom protein</fullName>
        <shortName>CRVP</shortName>
    </alternativeName>
</protein>